<feature type="chain" id="PRO_0000127963" description="Uncharacterized protein AF_1096">
    <location>
        <begin position="1"/>
        <end position="141"/>
    </location>
</feature>
<feature type="transmembrane region" description="Helical" evidence="1">
    <location>
        <begin position="13"/>
        <end position="35"/>
    </location>
</feature>
<sequence length="141" mass="14586">MVRRKMDEKGVSPVIGVILMVAITVILAAVIASFVFGMSNVAPAAPPSAQLQVRTGSSADTVELKHMGGDPINCTSIKVLVNGKEESNALGSSGGCSDNLLKVGETETITLSGYGGQYVELTLVDIQTNKPILMTHVTVGG</sequence>
<name>Y1096_ARCFU</name>
<reference key="1">
    <citation type="journal article" date="1997" name="Nature">
        <title>The complete genome sequence of the hyperthermophilic, sulphate-reducing archaeon Archaeoglobus fulgidus.</title>
        <authorList>
            <person name="Klenk H.-P."/>
            <person name="Clayton R.A."/>
            <person name="Tomb J.-F."/>
            <person name="White O."/>
            <person name="Nelson K.E."/>
            <person name="Ketchum K.A."/>
            <person name="Dodson R.J."/>
            <person name="Gwinn M.L."/>
            <person name="Hickey E.K."/>
            <person name="Peterson J.D."/>
            <person name="Richardson D.L."/>
            <person name="Kerlavage A.R."/>
            <person name="Graham D.E."/>
            <person name="Kyrpides N.C."/>
            <person name="Fleischmann R.D."/>
            <person name="Quackenbush J."/>
            <person name="Lee N.H."/>
            <person name="Sutton G.G."/>
            <person name="Gill S.R."/>
            <person name="Kirkness E.F."/>
            <person name="Dougherty B.A."/>
            <person name="McKenney K."/>
            <person name="Adams M.D."/>
            <person name="Loftus B.J."/>
            <person name="Peterson S.N."/>
            <person name="Reich C.I."/>
            <person name="McNeil L.K."/>
            <person name="Badger J.H."/>
            <person name="Glodek A."/>
            <person name="Zhou L."/>
            <person name="Overbeek R."/>
            <person name="Gocayne J.D."/>
            <person name="Weidman J.F."/>
            <person name="McDonald L.A."/>
            <person name="Utterback T.R."/>
            <person name="Cotton M.D."/>
            <person name="Spriggs T."/>
            <person name="Artiach P."/>
            <person name="Kaine B.P."/>
            <person name="Sykes S.M."/>
            <person name="Sadow P.W."/>
            <person name="D'Andrea K.P."/>
            <person name="Bowman C."/>
            <person name="Fujii C."/>
            <person name="Garland S.A."/>
            <person name="Mason T.M."/>
            <person name="Olsen G.J."/>
            <person name="Fraser C.M."/>
            <person name="Smith H.O."/>
            <person name="Woese C.R."/>
            <person name="Venter J.C."/>
        </authorList>
    </citation>
    <scope>NUCLEOTIDE SEQUENCE [LARGE SCALE GENOMIC DNA]</scope>
    <source>
        <strain>ATCC 49558 / DSM 4304 / JCM 9628 / NBRC 100126 / VC-16</strain>
    </source>
</reference>
<keyword id="KW-0472">Membrane</keyword>
<keyword id="KW-1185">Reference proteome</keyword>
<keyword id="KW-0812">Transmembrane</keyword>
<keyword id="KW-1133">Transmembrane helix</keyword>
<gene>
    <name type="ordered locus">AF_1096</name>
</gene>
<proteinExistence type="predicted"/>
<organism>
    <name type="scientific">Archaeoglobus fulgidus (strain ATCC 49558 / DSM 4304 / JCM 9628 / NBRC 100126 / VC-16)</name>
    <dbReference type="NCBI Taxonomy" id="224325"/>
    <lineage>
        <taxon>Archaea</taxon>
        <taxon>Methanobacteriati</taxon>
        <taxon>Methanobacteriota</taxon>
        <taxon>Archaeoglobi</taxon>
        <taxon>Archaeoglobales</taxon>
        <taxon>Archaeoglobaceae</taxon>
        <taxon>Archaeoglobus</taxon>
    </lineage>
</organism>
<accession>O29169</accession>
<protein>
    <recommendedName>
        <fullName>Uncharacterized protein AF_1096</fullName>
    </recommendedName>
</protein>
<evidence type="ECO:0000255" key="1"/>
<evidence type="ECO:0000305" key="2"/>
<dbReference type="EMBL" id="AE000782">
    <property type="protein sequence ID" value="AAB90161.1"/>
    <property type="molecule type" value="Genomic_DNA"/>
</dbReference>
<dbReference type="PIR" id="G69386">
    <property type="entry name" value="G69386"/>
</dbReference>
<dbReference type="RefSeq" id="WP_010878592.1">
    <property type="nucleotide sequence ID" value="NC_000917.1"/>
</dbReference>
<dbReference type="SMR" id="O29169"/>
<dbReference type="PaxDb" id="224325-AF_1096"/>
<dbReference type="DNASU" id="1484317"/>
<dbReference type="EnsemblBacteria" id="AAB90161">
    <property type="protein sequence ID" value="AAB90161"/>
    <property type="gene ID" value="AF_1096"/>
</dbReference>
<dbReference type="GeneID" id="63606523"/>
<dbReference type="KEGG" id="afu:AF_1096"/>
<dbReference type="eggNOG" id="arCOG02416">
    <property type="taxonomic scope" value="Archaea"/>
</dbReference>
<dbReference type="HOGENOM" id="CLU_116126_0_0_2"/>
<dbReference type="Proteomes" id="UP000002199">
    <property type="component" value="Chromosome"/>
</dbReference>
<dbReference type="GO" id="GO:0016020">
    <property type="term" value="C:membrane"/>
    <property type="evidence" value="ECO:0007669"/>
    <property type="project" value="UniProtKB-SubCell"/>
</dbReference>
<dbReference type="InterPro" id="IPR013373">
    <property type="entry name" value="Flagellin/pilin_N_arc"/>
</dbReference>
<dbReference type="InterPro" id="IPR012859">
    <property type="entry name" value="Pilin_N_archaeal"/>
</dbReference>
<dbReference type="NCBIfam" id="TIGR02537">
    <property type="entry name" value="arch_flag_Nterm"/>
    <property type="match status" value="1"/>
</dbReference>
<dbReference type="PANTHER" id="PTHR38138:SF1">
    <property type="entry name" value="ARCHAEAL TYPE IV PILIN N-TERMINAL DOMAIN-CONTAINING PROTEIN"/>
    <property type="match status" value="1"/>
</dbReference>
<dbReference type="PANTHER" id="PTHR38138">
    <property type="entry name" value="VNG6441H"/>
    <property type="match status" value="1"/>
</dbReference>
<dbReference type="Pfam" id="PF07790">
    <property type="entry name" value="Pilin_N"/>
    <property type="match status" value="1"/>
</dbReference>
<comment type="subcellular location">
    <subcellularLocation>
        <location evidence="2">Membrane</location>
        <topology evidence="2">Single-pass membrane protein</topology>
    </subcellularLocation>
</comment>